<protein>
    <recommendedName>
        <fullName evidence="1">Alanine racemase</fullName>
        <ecNumber evidence="1">5.1.1.1</ecNumber>
    </recommendedName>
</protein>
<evidence type="ECO:0000255" key="1">
    <source>
        <dbReference type="HAMAP-Rule" id="MF_01201"/>
    </source>
</evidence>
<organism>
    <name type="scientific">Campylobacter jejuni subsp. jejuni serotype O:2 (strain ATCC 700819 / NCTC 11168)</name>
    <dbReference type="NCBI Taxonomy" id="192222"/>
    <lineage>
        <taxon>Bacteria</taxon>
        <taxon>Pseudomonadati</taxon>
        <taxon>Campylobacterota</taxon>
        <taxon>Epsilonproteobacteria</taxon>
        <taxon>Campylobacterales</taxon>
        <taxon>Campylobacteraceae</taxon>
        <taxon>Campylobacter</taxon>
    </lineage>
</organism>
<reference key="1">
    <citation type="journal article" date="2000" name="Nature">
        <title>The genome sequence of the food-borne pathogen Campylobacter jejuni reveals hypervariable sequences.</title>
        <authorList>
            <person name="Parkhill J."/>
            <person name="Wren B.W."/>
            <person name="Mungall K.L."/>
            <person name="Ketley J.M."/>
            <person name="Churcher C.M."/>
            <person name="Basham D."/>
            <person name="Chillingworth T."/>
            <person name="Davies R.M."/>
            <person name="Feltwell T."/>
            <person name="Holroyd S."/>
            <person name="Jagels K."/>
            <person name="Karlyshev A.V."/>
            <person name="Moule S."/>
            <person name="Pallen M.J."/>
            <person name="Penn C.W."/>
            <person name="Quail M.A."/>
            <person name="Rajandream M.A."/>
            <person name="Rutherford K.M."/>
            <person name="van Vliet A.H.M."/>
            <person name="Whitehead S."/>
            <person name="Barrell B.G."/>
        </authorList>
    </citation>
    <scope>NUCLEOTIDE SEQUENCE [LARGE SCALE GENOMIC DNA]</scope>
    <source>
        <strain>ATCC 700819 / NCTC 11168</strain>
    </source>
</reference>
<gene>
    <name type="primary">alr</name>
    <name type="ordered locus">Cj0905c</name>
</gene>
<accession>Q9PP26</accession>
<accession>Q0P9Z3</accession>
<keyword id="KW-0413">Isomerase</keyword>
<keyword id="KW-0663">Pyridoxal phosphate</keyword>
<keyword id="KW-1185">Reference proteome</keyword>
<proteinExistence type="inferred from homology"/>
<comment type="function">
    <text evidence="1">Catalyzes the interconversion of L-alanine and D-alanine. May also act on other amino acids.</text>
</comment>
<comment type="catalytic activity">
    <reaction evidence="1">
        <text>L-alanine = D-alanine</text>
        <dbReference type="Rhea" id="RHEA:20249"/>
        <dbReference type="ChEBI" id="CHEBI:57416"/>
        <dbReference type="ChEBI" id="CHEBI:57972"/>
        <dbReference type="EC" id="5.1.1.1"/>
    </reaction>
</comment>
<comment type="cofactor">
    <cofactor evidence="1">
        <name>pyridoxal 5'-phosphate</name>
        <dbReference type="ChEBI" id="CHEBI:597326"/>
    </cofactor>
</comment>
<comment type="pathway">
    <text evidence="1">Amino-acid biosynthesis; D-alanine biosynthesis; D-alanine from L-alanine: step 1/1.</text>
</comment>
<comment type="similarity">
    <text evidence="1">Belongs to the alanine racemase family.</text>
</comment>
<feature type="chain" id="PRO_0000114505" description="Alanine racemase">
    <location>
        <begin position="1"/>
        <end position="328"/>
    </location>
</feature>
<feature type="active site" description="Proton acceptor; specific for D-alanine" evidence="1">
    <location>
        <position position="33"/>
    </location>
</feature>
<feature type="active site" description="Proton acceptor; specific for L-alanine" evidence="1">
    <location>
        <position position="237"/>
    </location>
</feature>
<feature type="binding site" evidence="1">
    <location>
        <position position="118"/>
    </location>
    <ligand>
        <name>substrate</name>
    </ligand>
</feature>
<feature type="binding site" evidence="1">
    <location>
        <position position="283"/>
    </location>
    <ligand>
        <name>substrate</name>
    </ligand>
</feature>
<feature type="modified residue" description="N6-(pyridoxal phosphate)lysine" evidence="1">
    <location>
        <position position="33"/>
    </location>
</feature>
<name>ALR_CAMJE</name>
<sequence>MSLIKIDQKAYEYNLRHIAKKIGSFQRLICVFKDNAYGHGAKLLAPLAKNLGVSFVAVKSEEEAREIEEFFENILILSHRPHGNENSRFIYALNDISQVKNYKQDIKIHLKIDTGMHRNGICVENLEHAINLIQGSDLKLTGMFTHFASADEMDGSFFVQKENFQKAKKIVKKYFSNLLFHSYNSAALFRGKIPEDEYCRVGLVQFGYGDSNLKRVLSLYAHRLSQRILQKGQSIGYGGIFTAAKDMEVATYDLGYADGLFRYNGRGELVLGNGKAMLGKMSMDSFSCENSGEEICVFKDADIWADFFHTINYEILVKLNPNIQRVLV</sequence>
<dbReference type="EC" id="5.1.1.1" evidence="1"/>
<dbReference type="EMBL" id="AL111168">
    <property type="protein sequence ID" value="CAL35026.1"/>
    <property type="molecule type" value="Genomic_DNA"/>
</dbReference>
<dbReference type="PIR" id="A81364">
    <property type="entry name" value="A81364"/>
</dbReference>
<dbReference type="RefSeq" id="WP_002852617.1">
    <property type="nucleotide sequence ID" value="NZ_SZUC01000001.1"/>
</dbReference>
<dbReference type="RefSeq" id="YP_002344304.1">
    <property type="nucleotide sequence ID" value="NC_002163.1"/>
</dbReference>
<dbReference type="SMR" id="Q9PP26"/>
<dbReference type="IntAct" id="Q9PP26">
    <property type="interactions" value="11"/>
</dbReference>
<dbReference type="STRING" id="192222.Cj0905c"/>
<dbReference type="PaxDb" id="192222-Cj0905c"/>
<dbReference type="EnsemblBacteria" id="CAL35026">
    <property type="protein sequence ID" value="CAL35026"/>
    <property type="gene ID" value="Cj0905c"/>
</dbReference>
<dbReference type="GeneID" id="905209"/>
<dbReference type="KEGG" id="cje:Cj0905c"/>
<dbReference type="PATRIC" id="fig|192222.6.peg.889"/>
<dbReference type="eggNOG" id="COG0787">
    <property type="taxonomic scope" value="Bacteria"/>
</dbReference>
<dbReference type="HOGENOM" id="CLU_028393_2_2_7"/>
<dbReference type="OrthoDB" id="9813814at2"/>
<dbReference type="UniPathway" id="UPA00042">
    <property type="reaction ID" value="UER00497"/>
</dbReference>
<dbReference type="Proteomes" id="UP000000799">
    <property type="component" value="Chromosome"/>
</dbReference>
<dbReference type="GO" id="GO:0005829">
    <property type="term" value="C:cytosol"/>
    <property type="evidence" value="ECO:0007669"/>
    <property type="project" value="TreeGrafter"/>
</dbReference>
<dbReference type="GO" id="GO:0008784">
    <property type="term" value="F:alanine racemase activity"/>
    <property type="evidence" value="ECO:0007669"/>
    <property type="project" value="UniProtKB-UniRule"/>
</dbReference>
<dbReference type="GO" id="GO:0030170">
    <property type="term" value="F:pyridoxal phosphate binding"/>
    <property type="evidence" value="ECO:0007669"/>
    <property type="project" value="UniProtKB-UniRule"/>
</dbReference>
<dbReference type="GO" id="GO:0030632">
    <property type="term" value="P:D-alanine biosynthetic process"/>
    <property type="evidence" value="ECO:0007669"/>
    <property type="project" value="UniProtKB-UniRule"/>
</dbReference>
<dbReference type="GO" id="GO:0009252">
    <property type="term" value="P:peptidoglycan biosynthetic process"/>
    <property type="evidence" value="ECO:0007669"/>
    <property type="project" value="TreeGrafter"/>
</dbReference>
<dbReference type="Gene3D" id="3.20.20.10">
    <property type="entry name" value="Alanine racemase"/>
    <property type="match status" value="1"/>
</dbReference>
<dbReference type="Gene3D" id="2.40.37.10">
    <property type="entry name" value="Lyase, Ornithine Decarboxylase, Chain A, domain 1"/>
    <property type="match status" value="1"/>
</dbReference>
<dbReference type="HAMAP" id="MF_01201">
    <property type="entry name" value="Ala_racemase"/>
    <property type="match status" value="1"/>
</dbReference>
<dbReference type="InterPro" id="IPR000821">
    <property type="entry name" value="Ala_racemase"/>
</dbReference>
<dbReference type="InterPro" id="IPR009006">
    <property type="entry name" value="Ala_racemase/Decarboxylase_C"/>
</dbReference>
<dbReference type="InterPro" id="IPR011079">
    <property type="entry name" value="Ala_racemase_C"/>
</dbReference>
<dbReference type="InterPro" id="IPR001608">
    <property type="entry name" value="Ala_racemase_N"/>
</dbReference>
<dbReference type="InterPro" id="IPR020622">
    <property type="entry name" value="Ala_racemase_pyridoxalP-BS"/>
</dbReference>
<dbReference type="InterPro" id="IPR029066">
    <property type="entry name" value="PLP-binding_barrel"/>
</dbReference>
<dbReference type="NCBIfam" id="TIGR00492">
    <property type="entry name" value="alr"/>
    <property type="match status" value="1"/>
</dbReference>
<dbReference type="NCBIfam" id="NF000791">
    <property type="entry name" value="PRK00053.2-2"/>
    <property type="match status" value="1"/>
</dbReference>
<dbReference type="PANTHER" id="PTHR30511">
    <property type="entry name" value="ALANINE RACEMASE"/>
    <property type="match status" value="1"/>
</dbReference>
<dbReference type="PANTHER" id="PTHR30511:SF0">
    <property type="entry name" value="ALANINE RACEMASE, CATABOLIC-RELATED"/>
    <property type="match status" value="1"/>
</dbReference>
<dbReference type="Pfam" id="PF00842">
    <property type="entry name" value="Ala_racemase_C"/>
    <property type="match status" value="1"/>
</dbReference>
<dbReference type="Pfam" id="PF01168">
    <property type="entry name" value="Ala_racemase_N"/>
    <property type="match status" value="1"/>
</dbReference>
<dbReference type="PRINTS" id="PR00992">
    <property type="entry name" value="ALARACEMASE"/>
</dbReference>
<dbReference type="SMART" id="SM01005">
    <property type="entry name" value="Ala_racemase_C"/>
    <property type="match status" value="1"/>
</dbReference>
<dbReference type="SUPFAM" id="SSF50621">
    <property type="entry name" value="Alanine racemase C-terminal domain-like"/>
    <property type="match status" value="1"/>
</dbReference>
<dbReference type="SUPFAM" id="SSF51419">
    <property type="entry name" value="PLP-binding barrel"/>
    <property type="match status" value="1"/>
</dbReference>
<dbReference type="PROSITE" id="PS00395">
    <property type="entry name" value="ALANINE_RACEMASE"/>
    <property type="match status" value="1"/>
</dbReference>